<gene>
    <name evidence="1" type="primary">groES</name>
    <name evidence="1" type="synonym">groS</name>
    <name type="ordered locus">BF3223</name>
</gene>
<dbReference type="EMBL" id="CR626927">
    <property type="protein sequence ID" value="CAH08918.1"/>
    <property type="molecule type" value="Genomic_DNA"/>
</dbReference>
<dbReference type="RefSeq" id="WP_005789740.1">
    <property type="nucleotide sequence ID" value="NZ_UFTH01000001.1"/>
</dbReference>
<dbReference type="SMR" id="Q5LAF5"/>
<dbReference type="PaxDb" id="272559-BF9343_3137"/>
<dbReference type="KEGG" id="bfs:BF9343_3137"/>
<dbReference type="eggNOG" id="COG0234">
    <property type="taxonomic scope" value="Bacteria"/>
</dbReference>
<dbReference type="HOGENOM" id="CLU_132825_2_3_10"/>
<dbReference type="Proteomes" id="UP000006731">
    <property type="component" value="Chromosome"/>
</dbReference>
<dbReference type="GO" id="GO:0005737">
    <property type="term" value="C:cytoplasm"/>
    <property type="evidence" value="ECO:0007669"/>
    <property type="project" value="UniProtKB-SubCell"/>
</dbReference>
<dbReference type="GO" id="GO:0005524">
    <property type="term" value="F:ATP binding"/>
    <property type="evidence" value="ECO:0007669"/>
    <property type="project" value="InterPro"/>
</dbReference>
<dbReference type="GO" id="GO:0046872">
    <property type="term" value="F:metal ion binding"/>
    <property type="evidence" value="ECO:0007669"/>
    <property type="project" value="TreeGrafter"/>
</dbReference>
<dbReference type="GO" id="GO:0044183">
    <property type="term" value="F:protein folding chaperone"/>
    <property type="evidence" value="ECO:0007669"/>
    <property type="project" value="InterPro"/>
</dbReference>
<dbReference type="GO" id="GO:0051087">
    <property type="term" value="F:protein-folding chaperone binding"/>
    <property type="evidence" value="ECO:0007669"/>
    <property type="project" value="TreeGrafter"/>
</dbReference>
<dbReference type="GO" id="GO:0051082">
    <property type="term" value="F:unfolded protein binding"/>
    <property type="evidence" value="ECO:0007669"/>
    <property type="project" value="TreeGrafter"/>
</dbReference>
<dbReference type="GO" id="GO:0051085">
    <property type="term" value="P:chaperone cofactor-dependent protein refolding"/>
    <property type="evidence" value="ECO:0007669"/>
    <property type="project" value="TreeGrafter"/>
</dbReference>
<dbReference type="CDD" id="cd00320">
    <property type="entry name" value="cpn10"/>
    <property type="match status" value="1"/>
</dbReference>
<dbReference type="FunFam" id="2.30.33.40:FF:000004">
    <property type="entry name" value="10 kDa chaperonin"/>
    <property type="match status" value="1"/>
</dbReference>
<dbReference type="Gene3D" id="2.30.33.40">
    <property type="entry name" value="GroES chaperonin"/>
    <property type="match status" value="1"/>
</dbReference>
<dbReference type="HAMAP" id="MF_00580">
    <property type="entry name" value="CH10"/>
    <property type="match status" value="1"/>
</dbReference>
<dbReference type="InterPro" id="IPR020818">
    <property type="entry name" value="Chaperonin_GroES"/>
</dbReference>
<dbReference type="InterPro" id="IPR037124">
    <property type="entry name" value="Chaperonin_GroES_sf"/>
</dbReference>
<dbReference type="InterPro" id="IPR011032">
    <property type="entry name" value="GroES-like_sf"/>
</dbReference>
<dbReference type="NCBIfam" id="NF001531">
    <property type="entry name" value="PRK00364.2-2"/>
    <property type="match status" value="1"/>
</dbReference>
<dbReference type="NCBIfam" id="NF001533">
    <property type="entry name" value="PRK00364.2-4"/>
    <property type="match status" value="1"/>
</dbReference>
<dbReference type="PANTHER" id="PTHR10772">
    <property type="entry name" value="10 KDA HEAT SHOCK PROTEIN"/>
    <property type="match status" value="1"/>
</dbReference>
<dbReference type="PANTHER" id="PTHR10772:SF58">
    <property type="entry name" value="CO-CHAPERONIN GROES"/>
    <property type="match status" value="1"/>
</dbReference>
<dbReference type="Pfam" id="PF00166">
    <property type="entry name" value="Cpn10"/>
    <property type="match status" value="1"/>
</dbReference>
<dbReference type="PRINTS" id="PR00297">
    <property type="entry name" value="CHAPERONIN10"/>
</dbReference>
<dbReference type="SMART" id="SM00883">
    <property type="entry name" value="Cpn10"/>
    <property type="match status" value="1"/>
</dbReference>
<dbReference type="SUPFAM" id="SSF50129">
    <property type="entry name" value="GroES-like"/>
    <property type="match status" value="1"/>
</dbReference>
<name>CH10_BACFN</name>
<accession>Q5LAF5</accession>
<reference key="1">
    <citation type="journal article" date="2005" name="Science">
        <title>Extensive DNA inversions in the B. fragilis genome control variable gene expression.</title>
        <authorList>
            <person name="Cerdeno-Tarraga A.-M."/>
            <person name="Patrick S."/>
            <person name="Crossman L.C."/>
            <person name="Blakely G."/>
            <person name="Abratt V."/>
            <person name="Lennard N."/>
            <person name="Poxton I."/>
            <person name="Duerden B."/>
            <person name="Harris B."/>
            <person name="Quail M.A."/>
            <person name="Barron A."/>
            <person name="Clark L."/>
            <person name="Corton C."/>
            <person name="Doggett J."/>
            <person name="Holden M.T.G."/>
            <person name="Larke N."/>
            <person name="Line A."/>
            <person name="Lord A."/>
            <person name="Norbertczak H."/>
            <person name="Ormond D."/>
            <person name="Price C."/>
            <person name="Rabbinowitsch E."/>
            <person name="Woodward J."/>
            <person name="Barrell B.G."/>
            <person name="Parkhill J."/>
        </authorList>
    </citation>
    <scope>NUCLEOTIDE SEQUENCE [LARGE SCALE GENOMIC DNA]</scope>
    <source>
        <strain>ATCC 25285 / DSM 2151 / CCUG 4856 / JCM 11019 / LMG 10263 / NCTC 9343 / Onslow / VPI 2553 / EN-2</strain>
    </source>
</reference>
<comment type="function">
    <text evidence="1">Together with the chaperonin GroEL, plays an essential role in assisting protein folding. The GroEL-GroES system forms a nano-cage that allows encapsulation of the non-native substrate proteins and provides a physical environment optimized to promote and accelerate protein folding. GroES binds to the apical surface of the GroEL ring, thereby capping the opening of the GroEL channel.</text>
</comment>
<comment type="subunit">
    <text evidence="1">Heptamer of 7 subunits arranged in a ring. Interacts with the chaperonin GroEL.</text>
</comment>
<comment type="subcellular location">
    <subcellularLocation>
        <location evidence="1">Cytoplasm</location>
    </subcellularLocation>
</comment>
<comment type="similarity">
    <text evidence="1">Belongs to the GroES chaperonin family.</text>
</comment>
<sequence length="90" mass="9618">MNIKPLADRVLILPAPAEEKTIGGIIIPDTAKEKPLKGEVVAVGHGTKDEEMVLKAGDTVLYGKYAGTELEVEGTKYLIMRQSDVLAVLG</sequence>
<protein>
    <recommendedName>
        <fullName evidence="1">Co-chaperonin GroES</fullName>
    </recommendedName>
    <alternativeName>
        <fullName evidence="1">10 kDa chaperonin</fullName>
    </alternativeName>
    <alternativeName>
        <fullName evidence="1">Chaperonin-10</fullName>
        <shortName evidence="1">Cpn10</shortName>
    </alternativeName>
</protein>
<feature type="chain" id="PRO_1000025209" description="Co-chaperonin GroES">
    <location>
        <begin position="1"/>
        <end position="90"/>
    </location>
</feature>
<keyword id="KW-0143">Chaperone</keyword>
<keyword id="KW-0963">Cytoplasm</keyword>
<organism>
    <name type="scientific">Bacteroides fragilis (strain ATCC 25285 / DSM 2151 / CCUG 4856 / JCM 11019 / LMG 10263 / NCTC 9343 / Onslow / VPI 2553 / EN-2)</name>
    <dbReference type="NCBI Taxonomy" id="272559"/>
    <lineage>
        <taxon>Bacteria</taxon>
        <taxon>Pseudomonadati</taxon>
        <taxon>Bacteroidota</taxon>
        <taxon>Bacteroidia</taxon>
        <taxon>Bacteroidales</taxon>
        <taxon>Bacteroidaceae</taxon>
        <taxon>Bacteroides</taxon>
    </lineage>
</organism>
<evidence type="ECO:0000255" key="1">
    <source>
        <dbReference type="HAMAP-Rule" id="MF_00580"/>
    </source>
</evidence>
<proteinExistence type="inferred from homology"/>